<reference key="1">
    <citation type="journal article" date="1986" name="J. Bacteriol.">
        <title>Lysogenic conversion of staphylococcal lipase is caused by insertion of the bacteriophage L54a genome into the lipase structural gene.</title>
        <authorList>
            <person name="Lee C.Y."/>
            <person name="Iandolo J.J."/>
        </authorList>
    </citation>
    <scope>NUCLEOTIDE SEQUENCE [GENOMIC DNA]</scope>
</reference>
<reference key="2">
    <citation type="journal article" date="1992" name="J. Bacteriol.">
        <title>In vivo processing of Staphylococcus aureus lipase.</title>
        <authorList>
            <person name="Rollof J."/>
            <person name="Normark S."/>
        </authorList>
    </citation>
    <scope>PROTEIN SEQUENCE OF 296-307</scope>
    <scope>PROTEOLYTIC PROCESSING</scope>
    <source>
        <strain>TEN 5</strain>
    </source>
</reference>
<name>LIP2_STAAU</name>
<accession>P10335</accession>
<feature type="signal peptide" evidence="2">
    <location>
        <begin position="1"/>
        <end position="37"/>
    </location>
</feature>
<feature type="propeptide" id="PRO_0000017752" evidence="5">
    <location>
        <begin position="38"/>
        <end position="295"/>
    </location>
</feature>
<feature type="chain" id="PRO_0000017753" description="Lipase 2">
    <location>
        <begin position="296"/>
        <end position="690"/>
    </location>
</feature>
<feature type="region of interest" description="Disordered" evidence="4">
    <location>
        <begin position="52"/>
        <end position="266"/>
    </location>
</feature>
<feature type="region of interest" description="Hydrophobic">
    <location>
        <begin position="311"/>
        <end position="690"/>
    </location>
</feature>
<feature type="compositionally biased region" description="Polar residues" evidence="4">
    <location>
        <begin position="52"/>
        <end position="71"/>
    </location>
</feature>
<feature type="compositionally biased region" description="Basic and acidic residues" evidence="4">
    <location>
        <begin position="72"/>
        <end position="81"/>
    </location>
</feature>
<feature type="compositionally biased region" description="Polar residues" evidence="4">
    <location>
        <begin position="82"/>
        <end position="114"/>
    </location>
</feature>
<feature type="compositionally biased region" description="Polar residues" evidence="4">
    <location>
        <begin position="124"/>
        <end position="171"/>
    </location>
</feature>
<feature type="compositionally biased region" description="Polar residues" evidence="4">
    <location>
        <begin position="185"/>
        <end position="206"/>
    </location>
</feature>
<feature type="compositionally biased region" description="Basic and acidic residues" evidence="4">
    <location>
        <begin position="225"/>
        <end position="237"/>
    </location>
</feature>
<feature type="compositionally biased region" description="Basic and acidic residues" evidence="4">
    <location>
        <begin position="257"/>
        <end position="266"/>
    </location>
</feature>
<feature type="active site" description="Nucleophile" evidence="1">
    <location>
        <position position="412"/>
    </location>
</feature>
<feature type="active site" description="Charge relay system" evidence="3">
    <location>
        <position position="603"/>
    </location>
</feature>
<feature type="active site" description="Charge relay system" evidence="3">
    <location>
        <position position="645"/>
    </location>
</feature>
<feature type="binding site" evidence="1">
    <location>
        <position position="579"/>
    </location>
    <ligand>
        <name>Ca(2+)</name>
        <dbReference type="ChEBI" id="CHEBI:29108"/>
    </ligand>
</feature>
<feature type="binding site" evidence="1">
    <location>
        <position position="644"/>
    </location>
    <ligand>
        <name>Ca(2+)</name>
        <dbReference type="ChEBI" id="CHEBI:29108"/>
    </ligand>
</feature>
<feature type="binding site" evidence="1">
    <location>
        <position position="647"/>
    </location>
    <ligand>
        <name>Ca(2+)</name>
        <dbReference type="ChEBI" id="CHEBI:29108"/>
    </ligand>
</feature>
<feature type="binding site" evidence="1">
    <location>
        <position position="652"/>
    </location>
    <ligand>
        <name>Ca(2+)</name>
        <dbReference type="ChEBI" id="CHEBI:29108"/>
    </ligand>
</feature>
<feature type="binding site" evidence="1">
    <location>
        <position position="655"/>
    </location>
    <ligand>
        <name>Ca(2+)</name>
        <dbReference type="ChEBI" id="CHEBI:29108"/>
    </ligand>
</feature>
<protein>
    <recommendedName>
        <fullName>Lipase 2</fullName>
        <ecNumber>3.1.1.3</ecNumber>
    </recommendedName>
    <alternativeName>
        <fullName>Glycerol ester hydrolase 2</fullName>
    </alternativeName>
</protein>
<comment type="catalytic activity">
    <reaction>
        <text>a triacylglycerol + H2O = a diacylglycerol + a fatty acid + H(+)</text>
        <dbReference type="Rhea" id="RHEA:12044"/>
        <dbReference type="ChEBI" id="CHEBI:15377"/>
        <dbReference type="ChEBI" id="CHEBI:15378"/>
        <dbReference type="ChEBI" id="CHEBI:17855"/>
        <dbReference type="ChEBI" id="CHEBI:18035"/>
        <dbReference type="ChEBI" id="CHEBI:28868"/>
        <dbReference type="EC" id="3.1.1.3"/>
    </reaction>
</comment>
<comment type="subcellular location">
    <subcellularLocation>
        <location>Secreted</location>
    </subcellularLocation>
</comment>
<comment type="miscellaneous">
    <text>The expression of Staphylococcus lipase is negatively regulated by bacteriophage lysogenization (lipase conversion).</text>
</comment>
<comment type="similarity">
    <text evidence="6">Belongs to the AB hydrolase superfamily. Lipase family.</text>
</comment>
<gene>
    <name type="primary">lip2</name>
    <name type="synonym">geh</name>
</gene>
<sequence length="690" mass="76388">MLRGQEERKYSIRKYSIGVVSVLAATMFVVSSHEAQASEKTSTNAAAQKETLNQPGEQGNAITSHQMQSGKQLDDMHKENGKSGTVTEGKDTLQSSKHQSTQNSKTIRTQNDNQVKQDSERQGSKQSHQNNATNNTERQNDQVQNTHHAERNGSQSTTSQSNDVDKSQPSIPAQKVIPNHDKAAPTSTTPPSNDKTAPKSTKAQDATTDKHPNQQDTHQPAHQIIDAKQDDTVRQSEQKPQVGDLSKHIDGQNSPEKPTDKNTDNKQLIKDALQAPKTRSTTNAAADAKKVRPLKANQVQPLNKYPVVFVHGFLGLVGDNAPALYPNYWGGNKFKVIEELRKQGYNVHQASVSAFGSNYDRAVELYYYIKGGRVDYGAAHAAKYGHERYGKTYKGIMPNWEPGKKVHLVGHSMGGQTIRLMEEFLRNGNKEEIAYHKAHGGEISPLFTGGHNNMVASITTLATPHNGSQAADKFGNTEAVRKIMFALNRFMGNKYSNIDLGLTQWGFKQLPNESYIDYIKRVSKSKIWTSDDNAAYDLTLDGSAKLNNMTSMNPNITYTTYTGVSSHTGPLGYENPDLGTFFLMATTSRIIGHDAREEWRKNDGVVPVISSLHPSNQPFVNVTNDEPATRRGIWQVKPIIQGWDHVDFIGVDFLDFKRKGAELANFYTGIINDLLRVEATESKGTQLKAS</sequence>
<proteinExistence type="evidence at protein level"/>
<organism>
    <name type="scientific">Staphylococcus aureus</name>
    <dbReference type="NCBI Taxonomy" id="1280"/>
    <lineage>
        <taxon>Bacteria</taxon>
        <taxon>Bacillati</taxon>
        <taxon>Bacillota</taxon>
        <taxon>Bacilli</taxon>
        <taxon>Bacillales</taxon>
        <taxon>Staphylococcaceae</taxon>
        <taxon>Staphylococcus</taxon>
    </lineage>
</organism>
<evidence type="ECO:0000250" key="1"/>
<evidence type="ECO:0000255" key="2"/>
<evidence type="ECO:0000255" key="3">
    <source>
        <dbReference type="PROSITE-ProRule" id="PRU10037"/>
    </source>
</evidence>
<evidence type="ECO:0000256" key="4">
    <source>
        <dbReference type="SAM" id="MobiDB-lite"/>
    </source>
</evidence>
<evidence type="ECO:0000269" key="5">
    <source>
    </source>
</evidence>
<evidence type="ECO:0000305" key="6"/>
<dbReference type="EC" id="3.1.1.3"/>
<dbReference type="EMBL" id="M12715">
    <property type="protein sequence ID" value="AAA26633.1"/>
    <property type="molecule type" value="Genomic_DNA"/>
</dbReference>
<dbReference type="PIR" id="A24545">
    <property type="entry name" value="A24545"/>
</dbReference>
<dbReference type="RefSeq" id="WP_000943836.1">
    <property type="nucleotide sequence ID" value="NZ_WWFR01000007.1"/>
</dbReference>
<dbReference type="SMR" id="P10335"/>
<dbReference type="ESTHER" id="staau-lipas">
    <property type="family name" value="Bacterial_lip_FamI.6"/>
</dbReference>
<dbReference type="PRO" id="PR:P10335"/>
<dbReference type="GO" id="GO:0005576">
    <property type="term" value="C:extracellular region"/>
    <property type="evidence" value="ECO:0007669"/>
    <property type="project" value="UniProtKB-SubCell"/>
</dbReference>
<dbReference type="GO" id="GO:0046872">
    <property type="term" value="F:metal ion binding"/>
    <property type="evidence" value="ECO:0007669"/>
    <property type="project" value="UniProtKB-KW"/>
</dbReference>
<dbReference type="GO" id="GO:0004806">
    <property type="term" value="F:triacylglycerol lipase activity"/>
    <property type="evidence" value="ECO:0007669"/>
    <property type="project" value="UniProtKB-EC"/>
</dbReference>
<dbReference type="GO" id="GO:0016042">
    <property type="term" value="P:lipid catabolic process"/>
    <property type="evidence" value="ECO:0007669"/>
    <property type="project" value="UniProtKB-KW"/>
</dbReference>
<dbReference type="Gene3D" id="3.40.50.1820">
    <property type="entry name" value="alpha/beta hydrolase"/>
    <property type="match status" value="1"/>
</dbReference>
<dbReference type="InterPro" id="IPR029058">
    <property type="entry name" value="AB_hydrolase_fold"/>
</dbReference>
<dbReference type="InterPro" id="IPR056304">
    <property type="entry name" value="Lip-like_C"/>
</dbReference>
<dbReference type="InterPro" id="IPR005877">
    <property type="entry name" value="YSIRK_signal_dom"/>
</dbReference>
<dbReference type="NCBIfam" id="NF047351">
    <property type="entry name" value="lipase_YSIRK_Sa"/>
    <property type="match status" value="1"/>
</dbReference>
<dbReference type="NCBIfam" id="TIGR01168">
    <property type="entry name" value="YSIRK_signal"/>
    <property type="match status" value="1"/>
</dbReference>
<dbReference type="PANTHER" id="PTHR34043">
    <property type="entry name" value="ALPHA/BETA-HYDROLASES SUPERFAMILY PROTEIN"/>
    <property type="match status" value="1"/>
</dbReference>
<dbReference type="PANTHER" id="PTHR34043:SF3">
    <property type="entry name" value="ALPHA_BETA-HYDROLASES SUPERFAMILY PROTEIN"/>
    <property type="match status" value="1"/>
</dbReference>
<dbReference type="Pfam" id="PF24708">
    <property type="entry name" value="Lip_C"/>
    <property type="match status" value="1"/>
</dbReference>
<dbReference type="Pfam" id="PF04650">
    <property type="entry name" value="YSIRK_signal"/>
    <property type="match status" value="1"/>
</dbReference>
<dbReference type="SUPFAM" id="SSF53474">
    <property type="entry name" value="alpha/beta-Hydrolases"/>
    <property type="match status" value="1"/>
</dbReference>
<dbReference type="PROSITE" id="PS00120">
    <property type="entry name" value="LIPASE_SER"/>
    <property type="match status" value="1"/>
</dbReference>
<keyword id="KW-0106">Calcium</keyword>
<keyword id="KW-0903">Direct protein sequencing</keyword>
<keyword id="KW-0378">Hydrolase</keyword>
<keyword id="KW-0442">Lipid degradation</keyword>
<keyword id="KW-0443">Lipid metabolism</keyword>
<keyword id="KW-0479">Metal-binding</keyword>
<keyword id="KW-0964">Secreted</keyword>
<keyword id="KW-0732">Signal</keyword>
<keyword id="KW-0865">Zymogen</keyword>